<gene>
    <name evidence="1" type="primary">kdpC</name>
    <name type="ordered locus">SAOUHSC_02310</name>
</gene>
<feature type="chain" id="PRO_1000022320" description="Potassium-transporting ATPase KdpC subunit">
    <location>
        <begin position="1"/>
        <end position="186"/>
    </location>
</feature>
<feature type="transmembrane region" description="Helical" evidence="1">
    <location>
        <begin position="10"/>
        <end position="30"/>
    </location>
</feature>
<comment type="function">
    <text evidence="1">Part of the high-affinity ATP-driven potassium transport (or Kdp) system, which catalyzes the hydrolysis of ATP coupled with the electrogenic transport of potassium into the cytoplasm. This subunit acts as a catalytic chaperone that increases the ATP-binding affinity of the ATP-hydrolyzing subunit KdpB by the formation of a transient KdpB/KdpC/ATP ternary complex.</text>
</comment>
<comment type="subunit">
    <text evidence="1">The system is composed of three essential subunits: KdpA, KdpB and KdpC.</text>
</comment>
<comment type="subcellular location">
    <subcellularLocation>
        <location evidence="1">Cell membrane</location>
        <topology evidence="1">Single-pass membrane protein</topology>
    </subcellularLocation>
</comment>
<comment type="similarity">
    <text evidence="1">Belongs to the KdpC family.</text>
</comment>
<accession>Q2FWI1</accession>
<proteinExistence type="inferred from homology"/>
<name>KDPC_STAA8</name>
<keyword id="KW-0067">ATP-binding</keyword>
<keyword id="KW-1003">Cell membrane</keyword>
<keyword id="KW-0406">Ion transport</keyword>
<keyword id="KW-0472">Membrane</keyword>
<keyword id="KW-0547">Nucleotide-binding</keyword>
<keyword id="KW-0630">Potassium</keyword>
<keyword id="KW-0633">Potassium transport</keyword>
<keyword id="KW-1185">Reference proteome</keyword>
<keyword id="KW-0812">Transmembrane</keyword>
<keyword id="KW-1133">Transmembrane helix</keyword>
<keyword id="KW-0813">Transport</keyword>
<organism>
    <name type="scientific">Staphylococcus aureus (strain NCTC 8325 / PS 47)</name>
    <dbReference type="NCBI Taxonomy" id="93061"/>
    <lineage>
        <taxon>Bacteria</taxon>
        <taxon>Bacillati</taxon>
        <taxon>Bacillota</taxon>
        <taxon>Bacilli</taxon>
        <taxon>Bacillales</taxon>
        <taxon>Staphylococcaceae</taxon>
        <taxon>Staphylococcus</taxon>
    </lineage>
</organism>
<evidence type="ECO:0000255" key="1">
    <source>
        <dbReference type="HAMAP-Rule" id="MF_00276"/>
    </source>
</evidence>
<protein>
    <recommendedName>
        <fullName evidence="1">Potassium-transporting ATPase KdpC subunit</fullName>
    </recommendedName>
    <alternativeName>
        <fullName evidence="1">ATP phosphohydrolase [potassium-transporting] C chain</fullName>
    </alternativeName>
    <alternativeName>
        <fullName evidence="1">Potassium-binding and translocating subunit C</fullName>
    </alternativeName>
    <alternativeName>
        <fullName evidence="1">Potassium-translocating ATPase C chain</fullName>
    </alternativeName>
</protein>
<dbReference type="EMBL" id="CP000253">
    <property type="protein sequence ID" value="ABD31344.1"/>
    <property type="molecule type" value="Genomic_DNA"/>
</dbReference>
<dbReference type="RefSeq" id="WP_001092411.1">
    <property type="nucleotide sequence ID" value="NZ_LS483365.1"/>
</dbReference>
<dbReference type="RefSeq" id="YP_500789.1">
    <property type="nucleotide sequence ID" value="NC_007795.1"/>
</dbReference>
<dbReference type="SMR" id="Q2FWI1"/>
<dbReference type="STRING" id="93061.SAOUHSC_02310"/>
<dbReference type="PaxDb" id="1280-SAXN108_2320"/>
<dbReference type="GeneID" id="3920935"/>
<dbReference type="KEGG" id="sao:SAOUHSC_02310"/>
<dbReference type="PATRIC" id="fig|93061.5.peg.2094"/>
<dbReference type="eggNOG" id="COG2156">
    <property type="taxonomic scope" value="Bacteria"/>
</dbReference>
<dbReference type="HOGENOM" id="CLU_077094_2_0_9"/>
<dbReference type="OrthoDB" id="9809491at2"/>
<dbReference type="PRO" id="PR:Q2FWI1"/>
<dbReference type="Proteomes" id="UP000008816">
    <property type="component" value="Chromosome"/>
</dbReference>
<dbReference type="GO" id="GO:0005886">
    <property type="term" value="C:plasma membrane"/>
    <property type="evidence" value="ECO:0007669"/>
    <property type="project" value="UniProtKB-SubCell"/>
</dbReference>
<dbReference type="GO" id="GO:0005524">
    <property type="term" value="F:ATP binding"/>
    <property type="evidence" value="ECO:0007669"/>
    <property type="project" value="UniProtKB-UniRule"/>
</dbReference>
<dbReference type="GO" id="GO:0008556">
    <property type="term" value="F:P-type potassium transmembrane transporter activity"/>
    <property type="evidence" value="ECO:0000318"/>
    <property type="project" value="GO_Central"/>
</dbReference>
<dbReference type="GO" id="GO:0071805">
    <property type="term" value="P:potassium ion transmembrane transport"/>
    <property type="evidence" value="ECO:0000318"/>
    <property type="project" value="GO_Central"/>
</dbReference>
<dbReference type="HAMAP" id="MF_00276">
    <property type="entry name" value="KdpC"/>
    <property type="match status" value="1"/>
</dbReference>
<dbReference type="InterPro" id="IPR003820">
    <property type="entry name" value="KdpC"/>
</dbReference>
<dbReference type="NCBIfam" id="TIGR00681">
    <property type="entry name" value="kdpC"/>
    <property type="match status" value="1"/>
</dbReference>
<dbReference type="NCBIfam" id="NF010602">
    <property type="entry name" value="PRK13998.1"/>
    <property type="match status" value="1"/>
</dbReference>
<dbReference type="PANTHER" id="PTHR30042">
    <property type="entry name" value="POTASSIUM-TRANSPORTING ATPASE C CHAIN"/>
    <property type="match status" value="1"/>
</dbReference>
<dbReference type="PANTHER" id="PTHR30042:SF2">
    <property type="entry name" value="POTASSIUM-TRANSPORTING ATPASE KDPC SUBUNIT"/>
    <property type="match status" value="1"/>
</dbReference>
<dbReference type="Pfam" id="PF02669">
    <property type="entry name" value="KdpC"/>
    <property type="match status" value="1"/>
</dbReference>
<dbReference type="PIRSF" id="PIRSF001296">
    <property type="entry name" value="K_ATPase_KdpC"/>
    <property type="match status" value="1"/>
</dbReference>
<reference key="1">
    <citation type="book" date="2006" name="Gram positive pathogens, 2nd edition">
        <title>The Staphylococcus aureus NCTC 8325 genome.</title>
        <editorList>
            <person name="Fischetti V."/>
            <person name="Novick R."/>
            <person name="Ferretti J."/>
            <person name="Portnoy D."/>
            <person name="Rood J."/>
        </editorList>
        <authorList>
            <person name="Gillaspy A.F."/>
            <person name="Worrell V."/>
            <person name="Orvis J."/>
            <person name="Roe B.A."/>
            <person name="Dyer D.W."/>
            <person name="Iandolo J.J."/>
        </authorList>
    </citation>
    <scope>NUCLEOTIDE SEQUENCE [LARGE SCALE GENOMIC DNA]</scope>
    <source>
        <strain>NCTC 8325 / PS 47</strain>
    </source>
</reference>
<sequence>MNTIRNSICLTIITMVLCGFLFPLAITLIGQIFFYQQANGSLITYDNRIVGSKLIGQHWTETRYFHGRPSAVDYNMNPEKLYKNGVSSGGSNESNGNTELIARMKHHVKFGNSNVTIDAATSSGSGLDPHITVENALKQAPRIADARHVSTSRVADLIQHRKQRGVLTNDYVNVLELNIALDKMKD</sequence>